<comment type="similarity">
    <text evidence="1">Belongs to the bacterial ribosomal protein bL33 family.</text>
</comment>
<name>RL33_FLAJ1</name>
<reference key="1">
    <citation type="journal article" date="2009" name="Appl. Environ. Microbiol.">
        <title>Novel features of the polysaccharide-digesting gliding bacterium Flavobacterium johnsoniae as revealed by genome sequence analysis.</title>
        <authorList>
            <person name="McBride M.J."/>
            <person name="Xie G."/>
            <person name="Martens E.C."/>
            <person name="Lapidus A."/>
            <person name="Henrissat B."/>
            <person name="Rhodes R.G."/>
            <person name="Goltsman E."/>
            <person name="Wang W."/>
            <person name="Xu J."/>
            <person name="Hunnicutt D.W."/>
            <person name="Staroscik A.M."/>
            <person name="Hoover T.R."/>
            <person name="Cheng Y.Q."/>
            <person name="Stein J.L."/>
        </authorList>
    </citation>
    <scope>NUCLEOTIDE SEQUENCE [LARGE SCALE GENOMIC DNA]</scope>
    <source>
        <strain>ATCC 17061 / DSM 2064 / JCM 8514 / BCRC 14874 / CCUG 350202 / NBRC 14942 / NCIMB 11054 / UW101</strain>
    </source>
</reference>
<proteinExistence type="inferred from homology"/>
<keyword id="KW-0687">Ribonucleoprotein</keyword>
<keyword id="KW-0689">Ribosomal protein</keyword>
<accession>A5F9Z0</accession>
<gene>
    <name evidence="1" type="primary">rpmG</name>
    <name type="ordered locus">Fjoh_4982</name>
</gene>
<sequence length="60" mass="6918">MAKKGNRIQVILECTEHKTSGVPGTSRYITTKNKKNTPDRLEIKKFNPILKRVTVHKEIK</sequence>
<dbReference type="EMBL" id="CP000685">
    <property type="protein sequence ID" value="ABQ07981.1"/>
    <property type="molecule type" value="Genomic_DNA"/>
</dbReference>
<dbReference type="RefSeq" id="WP_008253902.1">
    <property type="nucleotide sequence ID" value="NZ_MUGZ01000004.1"/>
</dbReference>
<dbReference type="SMR" id="A5F9Z0"/>
<dbReference type="STRING" id="376686.Fjoh_4982"/>
<dbReference type="GeneID" id="96798504"/>
<dbReference type="KEGG" id="fjo:Fjoh_4982"/>
<dbReference type="eggNOG" id="COG0267">
    <property type="taxonomic scope" value="Bacteria"/>
</dbReference>
<dbReference type="HOGENOM" id="CLU_190949_3_0_10"/>
<dbReference type="OrthoDB" id="9801333at2"/>
<dbReference type="Proteomes" id="UP000006694">
    <property type="component" value="Chromosome"/>
</dbReference>
<dbReference type="GO" id="GO:0005737">
    <property type="term" value="C:cytoplasm"/>
    <property type="evidence" value="ECO:0007669"/>
    <property type="project" value="UniProtKB-ARBA"/>
</dbReference>
<dbReference type="GO" id="GO:1990904">
    <property type="term" value="C:ribonucleoprotein complex"/>
    <property type="evidence" value="ECO:0007669"/>
    <property type="project" value="UniProtKB-KW"/>
</dbReference>
<dbReference type="GO" id="GO:0005840">
    <property type="term" value="C:ribosome"/>
    <property type="evidence" value="ECO:0007669"/>
    <property type="project" value="UniProtKB-KW"/>
</dbReference>
<dbReference type="GO" id="GO:0003735">
    <property type="term" value="F:structural constituent of ribosome"/>
    <property type="evidence" value="ECO:0007669"/>
    <property type="project" value="InterPro"/>
</dbReference>
<dbReference type="GO" id="GO:0006412">
    <property type="term" value="P:translation"/>
    <property type="evidence" value="ECO:0007669"/>
    <property type="project" value="UniProtKB-UniRule"/>
</dbReference>
<dbReference type="Gene3D" id="2.20.28.120">
    <property type="entry name" value="Ribosomal protein L33"/>
    <property type="match status" value="1"/>
</dbReference>
<dbReference type="HAMAP" id="MF_00294">
    <property type="entry name" value="Ribosomal_bL33"/>
    <property type="match status" value="1"/>
</dbReference>
<dbReference type="InterPro" id="IPR001705">
    <property type="entry name" value="Ribosomal_bL33"/>
</dbReference>
<dbReference type="InterPro" id="IPR038584">
    <property type="entry name" value="Ribosomal_bL33_sf"/>
</dbReference>
<dbReference type="InterPro" id="IPR011332">
    <property type="entry name" value="Ribosomal_zn-bd"/>
</dbReference>
<dbReference type="NCBIfam" id="NF001764">
    <property type="entry name" value="PRK00504.1"/>
    <property type="match status" value="1"/>
</dbReference>
<dbReference type="NCBIfam" id="NF001860">
    <property type="entry name" value="PRK00595.1"/>
    <property type="match status" value="1"/>
</dbReference>
<dbReference type="NCBIfam" id="TIGR01023">
    <property type="entry name" value="rpmG_bact"/>
    <property type="match status" value="1"/>
</dbReference>
<dbReference type="PANTHER" id="PTHR43168">
    <property type="entry name" value="50S RIBOSOMAL PROTEIN L33, CHLOROPLASTIC"/>
    <property type="match status" value="1"/>
</dbReference>
<dbReference type="PANTHER" id="PTHR43168:SF2">
    <property type="entry name" value="LARGE RIBOSOMAL SUBUNIT PROTEIN BL33C"/>
    <property type="match status" value="1"/>
</dbReference>
<dbReference type="Pfam" id="PF00471">
    <property type="entry name" value="Ribosomal_L33"/>
    <property type="match status" value="1"/>
</dbReference>
<dbReference type="SUPFAM" id="SSF57829">
    <property type="entry name" value="Zn-binding ribosomal proteins"/>
    <property type="match status" value="1"/>
</dbReference>
<feature type="chain" id="PRO_1000078912" description="Large ribosomal subunit protein bL33">
    <location>
        <begin position="1"/>
        <end position="60"/>
    </location>
</feature>
<protein>
    <recommendedName>
        <fullName evidence="1">Large ribosomal subunit protein bL33</fullName>
    </recommendedName>
    <alternativeName>
        <fullName evidence="2">50S ribosomal protein L33</fullName>
    </alternativeName>
</protein>
<evidence type="ECO:0000255" key="1">
    <source>
        <dbReference type="HAMAP-Rule" id="MF_00294"/>
    </source>
</evidence>
<evidence type="ECO:0000305" key="2"/>
<organism>
    <name type="scientific">Flavobacterium johnsoniae (strain ATCC 17061 / DSM 2064 / JCM 8514 / BCRC 14874 / CCUG 350202 / NBRC 14942 / NCIMB 11054 / UW101)</name>
    <name type="common">Cytophaga johnsonae</name>
    <dbReference type="NCBI Taxonomy" id="376686"/>
    <lineage>
        <taxon>Bacteria</taxon>
        <taxon>Pseudomonadati</taxon>
        <taxon>Bacteroidota</taxon>
        <taxon>Flavobacteriia</taxon>
        <taxon>Flavobacteriales</taxon>
        <taxon>Flavobacteriaceae</taxon>
        <taxon>Flavobacterium</taxon>
    </lineage>
</organism>